<gene>
    <name type="primary">Sema3g</name>
</gene>
<proteinExistence type="evidence at transcript level"/>
<dbReference type="EMBL" id="AB127607">
    <property type="protein sequence ID" value="BAE06156.1"/>
    <property type="molecule type" value="mRNA"/>
</dbReference>
<dbReference type="EMBL" id="AK137463">
    <property type="protein sequence ID" value="BAE23363.1"/>
    <property type="molecule type" value="mRNA"/>
</dbReference>
<dbReference type="CCDS" id="CCDS26908.1"/>
<dbReference type="RefSeq" id="NP_001020550.1">
    <property type="nucleotide sequence ID" value="NM_001025379.1"/>
</dbReference>
<dbReference type="SMR" id="Q4LFA9"/>
<dbReference type="BioGRID" id="230073">
    <property type="interactions" value="1"/>
</dbReference>
<dbReference type="FunCoup" id="Q4LFA9">
    <property type="interactions" value="426"/>
</dbReference>
<dbReference type="STRING" id="10090.ENSMUSP00000087643"/>
<dbReference type="GlyConnect" id="2695">
    <property type="glycosylation" value="1 N-Linked glycan (1 site)"/>
</dbReference>
<dbReference type="GlyCosmos" id="Q4LFA9">
    <property type="glycosylation" value="3 sites, 1 glycan"/>
</dbReference>
<dbReference type="GlyGen" id="Q4LFA9">
    <property type="glycosylation" value="4 sites, 3 N-linked glycans (4 sites)"/>
</dbReference>
<dbReference type="iPTMnet" id="Q4LFA9"/>
<dbReference type="PhosphoSitePlus" id="Q4LFA9"/>
<dbReference type="PaxDb" id="10090-ENSMUSP00000087643"/>
<dbReference type="PeptideAtlas" id="Q4LFA9"/>
<dbReference type="ProteomicsDB" id="261151"/>
<dbReference type="Antibodypedia" id="937">
    <property type="antibodies" value="129 antibodies from 20 providers"/>
</dbReference>
<dbReference type="Ensembl" id="ENSMUST00000090180.4">
    <property type="protein sequence ID" value="ENSMUSP00000087643.3"/>
    <property type="gene ID" value="ENSMUSG00000021904.7"/>
</dbReference>
<dbReference type="GeneID" id="218877"/>
<dbReference type="KEGG" id="mmu:218877"/>
<dbReference type="UCSC" id="uc007sxe.1">
    <property type="organism name" value="mouse"/>
</dbReference>
<dbReference type="AGR" id="MGI:3041242"/>
<dbReference type="CTD" id="56920"/>
<dbReference type="MGI" id="MGI:3041242">
    <property type="gene designation" value="Sema3g"/>
</dbReference>
<dbReference type="VEuPathDB" id="HostDB:ENSMUSG00000021904"/>
<dbReference type="eggNOG" id="KOG3611">
    <property type="taxonomic scope" value="Eukaryota"/>
</dbReference>
<dbReference type="GeneTree" id="ENSGT00940000157677"/>
<dbReference type="HOGENOM" id="CLU_009051_5_0_1"/>
<dbReference type="InParanoid" id="Q4LFA9"/>
<dbReference type="OMA" id="DLQAMYL"/>
<dbReference type="OrthoDB" id="9988752at2759"/>
<dbReference type="PhylomeDB" id="Q4LFA9"/>
<dbReference type="TreeFam" id="TF316102"/>
<dbReference type="BioGRID-ORCS" id="218877">
    <property type="hits" value="2 hits in 78 CRISPR screens"/>
</dbReference>
<dbReference type="PRO" id="PR:Q4LFA9"/>
<dbReference type="Proteomes" id="UP000000589">
    <property type="component" value="Chromosome 14"/>
</dbReference>
<dbReference type="RNAct" id="Q4LFA9">
    <property type="molecule type" value="protein"/>
</dbReference>
<dbReference type="Bgee" id="ENSMUSG00000021904">
    <property type="expression patterns" value="Expressed in right lung and 174 other cell types or tissues"/>
</dbReference>
<dbReference type="GO" id="GO:0005576">
    <property type="term" value="C:extracellular region"/>
    <property type="evidence" value="ECO:0007669"/>
    <property type="project" value="UniProtKB-SubCell"/>
</dbReference>
<dbReference type="GO" id="GO:0030215">
    <property type="term" value="F:semaphorin receptor binding"/>
    <property type="evidence" value="ECO:0007669"/>
    <property type="project" value="InterPro"/>
</dbReference>
<dbReference type="GO" id="GO:0005102">
    <property type="term" value="F:signaling receptor binding"/>
    <property type="evidence" value="ECO:0000353"/>
    <property type="project" value="UniProtKB"/>
</dbReference>
<dbReference type="GO" id="GO:0030517">
    <property type="term" value="P:negative regulation of axon extension"/>
    <property type="evidence" value="ECO:0000314"/>
    <property type="project" value="UniProtKB"/>
</dbReference>
<dbReference type="CDD" id="cd05871">
    <property type="entry name" value="Ig_Sema3"/>
    <property type="match status" value="1"/>
</dbReference>
<dbReference type="FunFam" id="2.130.10.10:FF:000015">
    <property type="entry name" value="Semaphorin 3B"/>
    <property type="match status" value="1"/>
</dbReference>
<dbReference type="FunFam" id="2.60.40.10:FF:000030">
    <property type="entry name" value="Semaphorin 3F like"/>
    <property type="match status" value="1"/>
</dbReference>
<dbReference type="FunFam" id="3.30.1680.10:FF:000001">
    <property type="entry name" value="Semaphorin 3F like"/>
    <property type="match status" value="1"/>
</dbReference>
<dbReference type="Gene3D" id="2.60.40.10">
    <property type="entry name" value="Immunoglobulins"/>
    <property type="match status" value="1"/>
</dbReference>
<dbReference type="Gene3D" id="3.30.1680.10">
    <property type="entry name" value="ligand-binding face of the semaphorins, domain 2"/>
    <property type="match status" value="1"/>
</dbReference>
<dbReference type="Gene3D" id="2.130.10.10">
    <property type="entry name" value="YVTN repeat-like/Quinoprotein amine dehydrogenase"/>
    <property type="match status" value="1"/>
</dbReference>
<dbReference type="InterPro" id="IPR007110">
    <property type="entry name" value="Ig-like_dom"/>
</dbReference>
<dbReference type="InterPro" id="IPR036179">
    <property type="entry name" value="Ig-like_dom_sf"/>
</dbReference>
<dbReference type="InterPro" id="IPR013783">
    <property type="entry name" value="Ig-like_fold"/>
</dbReference>
<dbReference type="InterPro" id="IPR013151">
    <property type="entry name" value="Immunoglobulin_dom"/>
</dbReference>
<dbReference type="InterPro" id="IPR016201">
    <property type="entry name" value="PSI"/>
</dbReference>
<dbReference type="InterPro" id="IPR001627">
    <property type="entry name" value="Semap_dom"/>
</dbReference>
<dbReference type="InterPro" id="IPR036352">
    <property type="entry name" value="Semap_dom_sf"/>
</dbReference>
<dbReference type="InterPro" id="IPR027231">
    <property type="entry name" value="Semaphorin"/>
</dbReference>
<dbReference type="InterPro" id="IPR015943">
    <property type="entry name" value="WD40/YVTN_repeat-like_dom_sf"/>
</dbReference>
<dbReference type="PANTHER" id="PTHR11036">
    <property type="entry name" value="SEMAPHORIN"/>
    <property type="match status" value="1"/>
</dbReference>
<dbReference type="PANTHER" id="PTHR11036:SF20">
    <property type="entry name" value="SEMAPHORIN-3G"/>
    <property type="match status" value="1"/>
</dbReference>
<dbReference type="Pfam" id="PF00047">
    <property type="entry name" value="ig"/>
    <property type="match status" value="1"/>
</dbReference>
<dbReference type="Pfam" id="PF01403">
    <property type="entry name" value="Sema"/>
    <property type="match status" value="1"/>
</dbReference>
<dbReference type="SMART" id="SM00423">
    <property type="entry name" value="PSI"/>
    <property type="match status" value="1"/>
</dbReference>
<dbReference type="SMART" id="SM00630">
    <property type="entry name" value="Sema"/>
    <property type="match status" value="1"/>
</dbReference>
<dbReference type="SUPFAM" id="SSF48726">
    <property type="entry name" value="Immunoglobulin"/>
    <property type="match status" value="1"/>
</dbReference>
<dbReference type="SUPFAM" id="SSF103575">
    <property type="entry name" value="Plexin repeat"/>
    <property type="match status" value="1"/>
</dbReference>
<dbReference type="SUPFAM" id="SSF101912">
    <property type="entry name" value="Sema domain"/>
    <property type="match status" value="1"/>
</dbReference>
<dbReference type="PROSITE" id="PS50835">
    <property type="entry name" value="IG_LIKE"/>
    <property type="match status" value="1"/>
</dbReference>
<dbReference type="PROSITE" id="PS51004">
    <property type="entry name" value="SEMA"/>
    <property type="match status" value="1"/>
</dbReference>
<protein>
    <recommendedName>
        <fullName>Semaphorin-3G</fullName>
    </recommendedName>
</protein>
<name>SEM3G_MOUSE</name>
<accession>Q4LFA9</accession>
<accession>Q3UVA7</accession>
<sequence length="780" mass="86695">MDPSAWAICCLLGSLLFHVGIPSPGPSPSVPRLRLSYRDLLSTNRSAIFLGPRGSLDLQVMYLDEYRDRLFLGSRDALYSLRLDQAWPDPREVLWLPQPGQKVECVRKGKDPLTECANFVRVLQPHNRTHLLACGTGAFQPICTFITVGHRGEHVLRLDASSVENGRGRCPHEPSRPFASTFVGGELYTGLTADFLGREAMIFRSGGPRPALRSDSDQSLLHEPRFVMAARIPDNSDRDDDKVYFFFSETVPSPDGGPGHVTISRVGRVCVNDAGGQRVLVNKWSTFLKARLVCSVPGPGGAETHFDQLEDVFLLWPKAGKSLEVYALFSTVSAVFQGFAVCVYHMVDIWEVFNGPFAHRDGPQHQWGPYGGKVPFPRPGVCPSKMTAQPGRPFGSTKDYPDEVLQFVRDHPLMFQPVRPRRGRPVLVKTHLAQRLRQIVVDRVEAEDGTYDVIFLGTDSGSVLKVIALQGGGLTEPEEVVLEELQVFKVPTPITEMEISVKRQTLYVGSPLGVARLQLHQCETYGSACAECCLARDPYCAWDGTACARYRPSSGKRRFRRQDIRHGNPAVQCLGQGQSQNKAASGLMTRVFGTEHNSTFLECLPKSPQAAVRWFLQRPGDKGTDQVKTDERVVQTAQGLLFRRLSRHDAGNYTCTTLEHGFSQTVVRFALEVIAAVQLDSLFLRESRLEEPSAWGSLASASPKTWYKDILQLTGFANLPRVDEYCERVWCRGVGERSGSFRGKGKQAKGKSWAGLELGKKMKSRVLAEHNRTPREVEAT</sequence>
<organism>
    <name type="scientific">Mus musculus</name>
    <name type="common">Mouse</name>
    <dbReference type="NCBI Taxonomy" id="10090"/>
    <lineage>
        <taxon>Eukaryota</taxon>
        <taxon>Metazoa</taxon>
        <taxon>Chordata</taxon>
        <taxon>Craniata</taxon>
        <taxon>Vertebrata</taxon>
        <taxon>Euteleostomi</taxon>
        <taxon>Mammalia</taxon>
        <taxon>Eutheria</taxon>
        <taxon>Euarchontoglires</taxon>
        <taxon>Glires</taxon>
        <taxon>Rodentia</taxon>
        <taxon>Myomorpha</taxon>
        <taxon>Muroidea</taxon>
        <taxon>Muridae</taxon>
        <taxon>Murinae</taxon>
        <taxon>Mus</taxon>
        <taxon>Mus</taxon>
    </lineage>
</organism>
<reference key="1">
    <citation type="journal article" date="2005" name="Genes Cells">
        <title>Identification and characterization of a novel member of murine semaphorin family.</title>
        <authorList>
            <person name="Taniguchi M."/>
            <person name="Masuda T."/>
            <person name="Fukaya M."/>
            <person name="Kataoka H."/>
            <person name="Mishina M."/>
            <person name="Yaginuma H."/>
            <person name="Watanabe M."/>
            <person name="Shimizu T."/>
        </authorList>
    </citation>
    <scope>NUCLEOTIDE SEQUENCE [MRNA]</scope>
    <scope>FUNCTION</scope>
    <scope>SPECIFICITY</scope>
    <source>
        <strain>C57BL/6J</strain>
        <tissue>Brain</tissue>
    </source>
</reference>
<reference key="2">
    <citation type="journal article" date="2005" name="Science">
        <title>The transcriptional landscape of the mammalian genome.</title>
        <authorList>
            <person name="Carninci P."/>
            <person name="Kasukawa T."/>
            <person name="Katayama S."/>
            <person name="Gough J."/>
            <person name="Frith M.C."/>
            <person name="Maeda N."/>
            <person name="Oyama R."/>
            <person name="Ravasi T."/>
            <person name="Lenhard B."/>
            <person name="Wells C."/>
            <person name="Kodzius R."/>
            <person name="Shimokawa K."/>
            <person name="Bajic V.B."/>
            <person name="Brenner S.E."/>
            <person name="Batalov S."/>
            <person name="Forrest A.R."/>
            <person name="Zavolan M."/>
            <person name="Davis M.J."/>
            <person name="Wilming L.G."/>
            <person name="Aidinis V."/>
            <person name="Allen J.E."/>
            <person name="Ambesi-Impiombato A."/>
            <person name="Apweiler R."/>
            <person name="Aturaliya R.N."/>
            <person name="Bailey T.L."/>
            <person name="Bansal M."/>
            <person name="Baxter L."/>
            <person name="Beisel K.W."/>
            <person name="Bersano T."/>
            <person name="Bono H."/>
            <person name="Chalk A.M."/>
            <person name="Chiu K.P."/>
            <person name="Choudhary V."/>
            <person name="Christoffels A."/>
            <person name="Clutterbuck D.R."/>
            <person name="Crowe M.L."/>
            <person name="Dalla E."/>
            <person name="Dalrymple B.P."/>
            <person name="de Bono B."/>
            <person name="Della Gatta G."/>
            <person name="di Bernardo D."/>
            <person name="Down T."/>
            <person name="Engstrom P."/>
            <person name="Fagiolini M."/>
            <person name="Faulkner G."/>
            <person name="Fletcher C.F."/>
            <person name="Fukushima T."/>
            <person name="Furuno M."/>
            <person name="Futaki S."/>
            <person name="Gariboldi M."/>
            <person name="Georgii-Hemming P."/>
            <person name="Gingeras T.R."/>
            <person name="Gojobori T."/>
            <person name="Green R.E."/>
            <person name="Gustincich S."/>
            <person name="Harbers M."/>
            <person name="Hayashi Y."/>
            <person name="Hensch T.K."/>
            <person name="Hirokawa N."/>
            <person name="Hill D."/>
            <person name="Huminiecki L."/>
            <person name="Iacono M."/>
            <person name="Ikeo K."/>
            <person name="Iwama A."/>
            <person name="Ishikawa T."/>
            <person name="Jakt M."/>
            <person name="Kanapin A."/>
            <person name="Katoh M."/>
            <person name="Kawasawa Y."/>
            <person name="Kelso J."/>
            <person name="Kitamura H."/>
            <person name="Kitano H."/>
            <person name="Kollias G."/>
            <person name="Krishnan S.P."/>
            <person name="Kruger A."/>
            <person name="Kummerfeld S.K."/>
            <person name="Kurochkin I.V."/>
            <person name="Lareau L.F."/>
            <person name="Lazarevic D."/>
            <person name="Lipovich L."/>
            <person name="Liu J."/>
            <person name="Liuni S."/>
            <person name="McWilliam S."/>
            <person name="Madan Babu M."/>
            <person name="Madera M."/>
            <person name="Marchionni L."/>
            <person name="Matsuda H."/>
            <person name="Matsuzawa S."/>
            <person name="Miki H."/>
            <person name="Mignone F."/>
            <person name="Miyake S."/>
            <person name="Morris K."/>
            <person name="Mottagui-Tabar S."/>
            <person name="Mulder N."/>
            <person name="Nakano N."/>
            <person name="Nakauchi H."/>
            <person name="Ng P."/>
            <person name="Nilsson R."/>
            <person name="Nishiguchi S."/>
            <person name="Nishikawa S."/>
            <person name="Nori F."/>
            <person name="Ohara O."/>
            <person name="Okazaki Y."/>
            <person name="Orlando V."/>
            <person name="Pang K.C."/>
            <person name="Pavan W.J."/>
            <person name="Pavesi G."/>
            <person name="Pesole G."/>
            <person name="Petrovsky N."/>
            <person name="Piazza S."/>
            <person name="Reed J."/>
            <person name="Reid J.F."/>
            <person name="Ring B.Z."/>
            <person name="Ringwald M."/>
            <person name="Rost B."/>
            <person name="Ruan Y."/>
            <person name="Salzberg S.L."/>
            <person name="Sandelin A."/>
            <person name="Schneider C."/>
            <person name="Schoenbach C."/>
            <person name="Sekiguchi K."/>
            <person name="Semple C.A."/>
            <person name="Seno S."/>
            <person name="Sessa L."/>
            <person name="Sheng Y."/>
            <person name="Shibata Y."/>
            <person name="Shimada H."/>
            <person name="Shimada K."/>
            <person name="Silva D."/>
            <person name="Sinclair B."/>
            <person name="Sperling S."/>
            <person name="Stupka E."/>
            <person name="Sugiura K."/>
            <person name="Sultana R."/>
            <person name="Takenaka Y."/>
            <person name="Taki K."/>
            <person name="Tammoja K."/>
            <person name="Tan S.L."/>
            <person name="Tang S."/>
            <person name="Taylor M.S."/>
            <person name="Tegner J."/>
            <person name="Teichmann S.A."/>
            <person name="Ueda H.R."/>
            <person name="van Nimwegen E."/>
            <person name="Verardo R."/>
            <person name="Wei C.L."/>
            <person name="Yagi K."/>
            <person name="Yamanishi H."/>
            <person name="Zabarovsky E."/>
            <person name="Zhu S."/>
            <person name="Zimmer A."/>
            <person name="Hide W."/>
            <person name="Bult C."/>
            <person name="Grimmond S.M."/>
            <person name="Teasdale R.D."/>
            <person name="Liu E.T."/>
            <person name="Brusic V."/>
            <person name="Quackenbush J."/>
            <person name="Wahlestedt C."/>
            <person name="Mattick J.S."/>
            <person name="Hume D.A."/>
            <person name="Kai C."/>
            <person name="Sasaki D."/>
            <person name="Tomaru Y."/>
            <person name="Fukuda S."/>
            <person name="Kanamori-Katayama M."/>
            <person name="Suzuki M."/>
            <person name="Aoki J."/>
            <person name="Arakawa T."/>
            <person name="Iida J."/>
            <person name="Imamura K."/>
            <person name="Itoh M."/>
            <person name="Kato T."/>
            <person name="Kawaji H."/>
            <person name="Kawagashira N."/>
            <person name="Kawashima T."/>
            <person name="Kojima M."/>
            <person name="Kondo S."/>
            <person name="Konno H."/>
            <person name="Nakano K."/>
            <person name="Ninomiya N."/>
            <person name="Nishio T."/>
            <person name="Okada M."/>
            <person name="Plessy C."/>
            <person name="Shibata K."/>
            <person name="Shiraki T."/>
            <person name="Suzuki S."/>
            <person name="Tagami M."/>
            <person name="Waki K."/>
            <person name="Watahiki A."/>
            <person name="Okamura-Oho Y."/>
            <person name="Suzuki H."/>
            <person name="Kawai J."/>
            <person name="Hayashizaki Y."/>
        </authorList>
    </citation>
    <scope>NUCLEOTIDE SEQUENCE [LARGE SCALE MRNA]</scope>
    <source>
        <strain>C57BL/6J</strain>
        <tissue>Bone</tissue>
    </source>
</reference>
<keyword id="KW-1015">Disulfide bond</keyword>
<keyword id="KW-0325">Glycoprotein</keyword>
<keyword id="KW-0393">Immunoglobulin domain</keyword>
<keyword id="KW-1185">Reference proteome</keyword>
<keyword id="KW-0964">Secreted</keyword>
<keyword id="KW-0732">Signal</keyword>
<comment type="function">
    <text evidence="4">Has chemorepulsive activities for sympathetic axons. Ligand of NRP2.</text>
</comment>
<comment type="subcellular location">
    <subcellularLocation>
        <location>Secreted</location>
    </subcellularLocation>
</comment>
<comment type="tissue specificity">
    <text>Highly expressed in lung and kidney. Weakly expressed in brain.</text>
</comment>
<comment type="similarity">
    <text evidence="5">Belongs to the semaphorin family.</text>
</comment>
<feature type="signal peptide" evidence="2">
    <location>
        <begin position="1"/>
        <end position="22"/>
    </location>
</feature>
<feature type="chain" id="PRO_0000257792" description="Semaphorin-3G">
    <location>
        <begin position="23"/>
        <end position="780"/>
    </location>
</feature>
<feature type="domain" description="Sema" evidence="3">
    <location>
        <begin position="32"/>
        <end position="519"/>
    </location>
</feature>
<feature type="domain" description="Ig-like C2-type">
    <location>
        <begin position="569"/>
        <end position="671"/>
    </location>
</feature>
<feature type="glycosylation site" description="N-linked (GlcNAc...) asparagine" evidence="2">
    <location>
        <position position="44"/>
    </location>
</feature>
<feature type="glycosylation site" description="N-linked (GlcNAc...) asparagine" evidence="2">
    <location>
        <position position="127"/>
    </location>
</feature>
<feature type="glycosylation site" description="N-linked (GlcNAc...) asparagine" evidence="2">
    <location>
        <position position="652"/>
    </location>
</feature>
<feature type="disulfide bond" evidence="1">
    <location>
        <begin position="105"/>
        <end position="116"/>
    </location>
</feature>
<feature type="disulfide bond" evidence="1">
    <location>
        <begin position="134"/>
        <end position="143"/>
    </location>
</feature>
<feature type="disulfide bond" evidence="1">
    <location>
        <begin position="270"/>
        <end position="382"/>
    </location>
</feature>
<feature type="disulfide bond" evidence="1">
    <location>
        <begin position="294"/>
        <end position="342"/>
    </location>
</feature>
<feature type="disulfide bond" evidence="1">
    <location>
        <begin position="522"/>
        <end position="540"/>
    </location>
</feature>
<feature type="disulfide bond" evidence="1">
    <location>
        <begin position="603"/>
        <end position="655"/>
    </location>
</feature>
<feature type="sequence conflict" description="In Ref. 2; BAE23363." evidence="5" ref="2">
    <original>K</original>
    <variation>R</variation>
    <location>
        <position position="385"/>
    </location>
</feature>
<evidence type="ECO:0000250" key="1"/>
<evidence type="ECO:0000255" key="2"/>
<evidence type="ECO:0000255" key="3">
    <source>
        <dbReference type="PROSITE-ProRule" id="PRU00352"/>
    </source>
</evidence>
<evidence type="ECO:0000269" key="4">
    <source>
    </source>
</evidence>
<evidence type="ECO:0000305" key="5"/>